<protein>
    <recommendedName>
        <fullName evidence="1">GMP synthase [glutamine-hydrolyzing]</fullName>
        <ecNumber evidence="1">6.3.5.2</ecNumber>
    </recommendedName>
    <alternativeName>
        <fullName evidence="1">GMP synthetase</fullName>
    </alternativeName>
    <alternativeName>
        <fullName evidence="1">Glutamine amidotransferase</fullName>
    </alternativeName>
</protein>
<accession>P0DB55</accession>
<accession>Q8K7E6</accession>
<name>GUAA_STRPQ</name>
<organism>
    <name type="scientific">Streptococcus pyogenes serotype M3 (strain SSI-1)</name>
    <dbReference type="NCBI Taxonomy" id="193567"/>
    <lineage>
        <taxon>Bacteria</taxon>
        <taxon>Bacillati</taxon>
        <taxon>Bacillota</taxon>
        <taxon>Bacilli</taxon>
        <taxon>Lactobacillales</taxon>
        <taxon>Streptococcaceae</taxon>
        <taxon>Streptococcus</taxon>
    </lineage>
</organism>
<keyword id="KW-0067">ATP-binding</keyword>
<keyword id="KW-0315">Glutamine amidotransferase</keyword>
<keyword id="KW-0332">GMP biosynthesis</keyword>
<keyword id="KW-0436">Ligase</keyword>
<keyword id="KW-0547">Nucleotide-binding</keyword>
<keyword id="KW-0658">Purine biosynthesis</keyword>
<comment type="function">
    <text evidence="1">Catalyzes the synthesis of GMP from XMP.</text>
</comment>
<comment type="catalytic activity">
    <reaction evidence="1">
        <text>XMP + L-glutamine + ATP + H2O = GMP + L-glutamate + AMP + diphosphate + 2 H(+)</text>
        <dbReference type="Rhea" id="RHEA:11680"/>
        <dbReference type="ChEBI" id="CHEBI:15377"/>
        <dbReference type="ChEBI" id="CHEBI:15378"/>
        <dbReference type="ChEBI" id="CHEBI:29985"/>
        <dbReference type="ChEBI" id="CHEBI:30616"/>
        <dbReference type="ChEBI" id="CHEBI:33019"/>
        <dbReference type="ChEBI" id="CHEBI:57464"/>
        <dbReference type="ChEBI" id="CHEBI:58115"/>
        <dbReference type="ChEBI" id="CHEBI:58359"/>
        <dbReference type="ChEBI" id="CHEBI:456215"/>
        <dbReference type="EC" id="6.3.5.2"/>
    </reaction>
</comment>
<comment type="pathway">
    <text evidence="1">Purine metabolism; GMP biosynthesis; GMP from XMP (L-Gln route): step 1/1.</text>
</comment>
<comment type="subunit">
    <text evidence="1">Homodimer.</text>
</comment>
<dbReference type="EC" id="6.3.5.2" evidence="1"/>
<dbReference type="EMBL" id="BA000034">
    <property type="protein sequence ID" value="BAC64140.1"/>
    <property type="molecule type" value="Genomic_DNA"/>
</dbReference>
<dbReference type="RefSeq" id="WP_002993734.1">
    <property type="nucleotide sequence ID" value="NC_004606.1"/>
</dbReference>
<dbReference type="SMR" id="P0DB55"/>
<dbReference type="MEROPS" id="C26.957"/>
<dbReference type="GeneID" id="69900826"/>
<dbReference type="KEGG" id="sps:SPs1045"/>
<dbReference type="HOGENOM" id="CLU_014340_0_5_9"/>
<dbReference type="UniPathway" id="UPA00189">
    <property type="reaction ID" value="UER00296"/>
</dbReference>
<dbReference type="GO" id="GO:0005829">
    <property type="term" value="C:cytosol"/>
    <property type="evidence" value="ECO:0007669"/>
    <property type="project" value="TreeGrafter"/>
</dbReference>
<dbReference type="GO" id="GO:0005524">
    <property type="term" value="F:ATP binding"/>
    <property type="evidence" value="ECO:0007669"/>
    <property type="project" value="UniProtKB-UniRule"/>
</dbReference>
<dbReference type="GO" id="GO:0003921">
    <property type="term" value="F:GMP synthase activity"/>
    <property type="evidence" value="ECO:0007669"/>
    <property type="project" value="InterPro"/>
</dbReference>
<dbReference type="CDD" id="cd01742">
    <property type="entry name" value="GATase1_GMP_Synthase"/>
    <property type="match status" value="1"/>
</dbReference>
<dbReference type="CDD" id="cd01997">
    <property type="entry name" value="GMP_synthase_C"/>
    <property type="match status" value="1"/>
</dbReference>
<dbReference type="FunFam" id="3.30.300.10:FF:000002">
    <property type="entry name" value="GMP synthase [glutamine-hydrolyzing]"/>
    <property type="match status" value="1"/>
</dbReference>
<dbReference type="FunFam" id="3.40.50.620:FF:000001">
    <property type="entry name" value="GMP synthase [glutamine-hydrolyzing]"/>
    <property type="match status" value="1"/>
</dbReference>
<dbReference type="FunFam" id="3.40.50.880:FF:000001">
    <property type="entry name" value="GMP synthase [glutamine-hydrolyzing]"/>
    <property type="match status" value="1"/>
</dbReference>
<dbReference type="Gene3D" id="3.30.300.10">
    <property type="match status" value="1"/>
</dbReference>
<dbReference type="Gene3D" id="3.40.50.880">
    <property type="match status" value="1"/>
</dbReference>
<dbReference type="Gene3D" id="3.40.50.620">
    <property type="entry name" value="HUPs"/>
    <property type="match status" value="1"/>
</dbReference>
<dbReference type="HAMAP" id="MF_00344">
    <property type="entry name" value="GMP_synthase"/>
    <property type="match status" value="1"/>
</dbReference>
<dbReference type="InterPro" id="IPR029062">
    <property type="entry name" value="Class_I_gatase-like"/>
</dbReference>
<dbReference type="InterPro" id="IPR017926">
    <property type="entry name" value="GATASE"/>
</dbReference>
<dbReference type="InterPro" id="IPR001674">
    <property type="entry name" value="GMP_synth_C"/>
</dbReference>
<dbReference type="InterPro" id="IPR004739">
    <property type="entry name" value="GMP_synth_GATase"/>
</dbReference>
<dbReference type="InterPro" id="IPR022955">
    <property type="entry name" value="GMP_synthase"/>
</dbReference>
<dbReference type="InterPro" id="IPR025777">
    <property type="entry name" value="GMPS_ATP_PPase_dom"/>
</dbReference>
<dbReference type="InterPro" id="IPR022310">
    <property type="entry name" value="NAD/GMP_synthase"/>
</dbReference>
<dbReference type="InterPro" id="IPR014729">
    <property type="entry name" value="Rossmann-like_a/b/a_fold"/>
</dbReference>
<dbReference type="NCBIfam" id="TIGR00884">
    <property type="entry name" value="guaA_Cterm"/>
    <property type="match status" value="1"/>
</dbReference>
<dbReference type="NCBIfam" id="TIGR00888">
    <property type="entry name" value="guaA_Nterm"/>
    <property type="match status" value="1"/>
</dbReference>
<dbReference type="NCBIfam" id="NF000848">
    <property type="entry name" value="PRK00074.1"/>
    <property type="match status" value="1"/>
</dbReference>
<dbReference type="PANTHER" id="PTHR11922:SF2">
    <property type="entry name" value="GMP SYNTHASE [GLUTAMINE-HYDROLYZING]"/>
    <property type="match status" value="1"/>
</dbReference>
<dbReference type="PANTHER" id="PTHR11922">
    <property type="entry name" value="GMP SYNTHASE-RELATED"/>
    <property type="match status" value="1"/>
</dbReference>
<dbReference type="Pfam" id="PF00117">
    <property type="entry name" value="GATase"/>
    <property type="match status" value="1"/>
</dbReference>
<dbReference type="Pfam" id="PF00958">
    <property type="entry name" value="GMP_synt_C"/>
    <property type="match status" value="1"/>
</dbReference>
<dbReference type="Pfam" id="PF02540">
    <property type="entry name" value="NAD_synthase"/>
    <property type="match status" value="1"/>
</dbReference>
<dbReference type="PRINTS" id="PR00097">
    <property type="entry name" value="ANTSNTHASEII"/>
</dbReference>
<dbReference type="PRINTS" id="PR00099">
    <property type="entry name" value="CPSGATASE"/>
</dbReference>
<dbReference type="PRINTS" id="PR00096">
    <property type="entry name" value="GATASE"/>
</dbReference>
<dbReference type="SUPFAM" id="SSF52402">
    <property type="entry name" value="Adenine nucleotide alpha hydrolases-like"/>
    <property type="match status" value="1"/>
</dbReference>
<dbReference type="SUPFAM" id="SSF52317">
    <property type="entry name" value="Class I glutamine amidotransferase-like"/>
    <property type="match status" value="1"/>
</dbReference>
<dbReference type="SUPFAM" id="SSF54810">
    <property type="entry name" value="GMP synthetase C-terminal dimerisation domain"/>
    <property type="match status" value="1"/>
</dbReference>
<dbReference type="PROSITE" id="PS51273">
    <property type="entry name" value="GATASE_TYPE_1"/>
    <property type="match status" value="1"/>
</dbReference>
<dbReference type="PROSITE" id="PS51553">
    <property type="entry name" value="GMPS_ATP_PPASE"/>
    <property type="match status" value="1"/>
</dbReference>
<evidence type="ECO:0000255" key="1">
    <source>
        <dbReference type="HAMAP-Rule" id="MF_00344"/>
    </source>
</evidence>
<proteinExistence type="inferred from homology"/>
<sequence length="520" mass="57513">MTEISILNDVQKIIVLDYGSQYNQLIARRIREFGVFSELKSHKITAQELHEINPIGIVLSGGPNSVYADNAFGIDPEIFELGIPILGICYGMQLITHKLGGKVVPAGQAGNREYGQSTLHLRETSKLFSGTPQEQLVLMSHGDAVTEIPEGFHLVGDSNDCPYAAIENTEKNLYGIQFHPEVRHSVYGNDILKNFAISICGARGDWSMDNFIDMEITKIRETVGDRKVLLGLSGGVDSSVVGVLLQKAIGDQLTCIFVDHGLLRKDEGDQVMGMLGGKFGLNIIRVDASKRFLDLLADVEDPEKKRKIIGNEFVYVFDDEASKLKGVDFLAQGTLYTDIIESGTETAQTIKSHHNVGGLPEDMQFELIEPLNTLFKDEVRALGIALGMPEEIVWRQPFPGPGLAIRVMGAITEEKLETVRESDAILREEIAKAGLDRDVWQYFTVNTGVRSVGVMGDGRTYDYTIAIRAITSIDGMTADFAQLPWDVLKKISTRIVNEVDHVNRIVYDITSKPPATVEWE</sequence>
<gene>
    <name evidence="1" type="primary">guaA</name>
    <name type="ordered locus">SPs1045</name>
</gene>
<reference key="1">
    <citation type="journal article" date="2003" name="Genome Res.">
        <title>Genome sequence of an M3 strain of Streptococcus pyogenes reveals a large-scale genomic rearrangement in invasive strains and new insights into phage evolution.</title>
        <authorList>
            <person name="Nakagawa I."/>
            <person name="Kurokawa K."/>
            <person name="Yamashita A."/>
            <person name="Nakata M."/>
            <person name="Tomiyasu Y."/>
            <person name="Okahashi N."/>
            <person name="Kawabata S."/>
            <person name="Yamazaki K."/>
            <person name="Shiba T."/>
            <person name="Yasunaga T."/>
            <person name="Hayashi H."/>
            <person name="Hattori M."/>
            <person name="Hamada S."/>
        </authorList>
    </citation>
    <scope>NUCLEOTIDE SEQUENCE [LARGE SCALE GENOMIC DNA]</scope>
    <source>
        <strain>SSI-1</strain>
    </source>
</reference>
<feature type="chain" id="PRO_0000411365" description="GMP synthase [glutamine-hydrolyzing]">
    <location>
        <begin position="1"/>
        <end position="520"/>
    </location>
</feature>
<feature type="domain" description="Glutamine amidotransferase type-1" evidence="1">
    <location>
        <begin position="12"/>
        <end position="205"/>
    </location>
</feature>
<feature type="domain" description="GMPS ATP-PPase" evidence="1">
    <location>
        <begin position="206"/>
        <end position="395"/>
    </location>
</feature>
<feature type="active site" description="Nucleophile" evidence="1">
    <location>
        <position position="89"/>
    </location>
</feature>
<feature type="active site" evidence="1">
    <location>
        <position position="179"/>
    </location>
</feature>
<feature type="active site" evidence="1">
    <location>
        <position position="181"/>
    </location>
</feature>
<feature type="binding site" evidence="1">
    <location>
        <begin position="233"/>
        <end position="239"/>
    </location>
    <ligand>
        <name>ATP</name>
        <dbReference type="ChEBI" id="CHEBI:30616"/>
    </ligand>
</feature>